<comment type="function">
    <text evidence="1">Represses a number of genes involved in the response to DNA damage (SOS response), including recA and lexA. In the presence of single-stranded DNA, RecA interacts with LexA causing an autocatalytic cleavage which disrupts the DNA-binding part of LexA, leading to derepression of the SOS regulon and eventually DNA repair.</text>
</comment>
<comment type="catalytic activity">
    <reaction evidence="1">
        <text>Hydrolysis of Ala-|-Gly bond in repressor LexA.</text>
        <dbReference type="EC" id="3.4.21.88"/>
    </reaction>
</comment>
<comment type="subunit">
    <text evidence="1">Homodimer.</text>
</comment>
<comment type="similarity">
    <text evidence="1">Belongs to the peptidase S24 family.</text>
</comment>
<comment type="sequence caution" evidence="2">
    <conflict type="erroneous initiation">
        <sequence resource="EMBL-CDS" id="ABC90714"/>
    </conflict>
</comment>
<proteinExistence type="inferred from homology"/>
<feature type="chain" id="PRO_0000322754" description="LexA repressor">
    <location>
        <begin position="1"/>
        <end position="239"/>
    </location>
</feature>
<feature type="DNA-binding region" description="H-T-H motif" evidence="1">
    <location>
        <begin position="26"/>
        <end position="46"/>
    </location>
</feature>
<feature type="active site" description="For autocatalytic cleavage activity" evidence="1">
    <location>
        <position position="159"/>
    </location>
</feature>
<feature type="active site" description="For autocatalytic cleavage activity" evidence="1">
    <location>
        <position position="197"/>
    </location>
</feature>
<feature type="site" description="Cleavage; by autolysis" evidence="1">
    <location>
        <begin position="124"/>
        <end position="125"/>
    </location>
</feature>
<organism>
    <name type="scientific">Rhizobium etli (strain ATCC 51251 / DSM 11541 / JCM 21823 / NBRC 15573 / CFN 42)</name>
    <dbReference type="NCBI Taxonomy" id="347834"/>
    <lineage>
        <taxon>Bacteria</taxon>
        <taxon>Pseudomonadati</taxon>
        <taxon>Pseudomonadota</taxon>
        <taxon>Alphaproteobacteria</taxon>
        <taxon>Hyphomicrobiales</taxon>
        <taxon>Rhizobiaceae</taxon>
        <taxon>Rhizobium/Agrobacterium group</taxon>
        <taxon>Rhizobium</taxon>
    </lineage>
</organism>
<dbReference type="EC" id="3.4.21.88" evidence="1"/>
<dbReference type="EMBL" id="CP000133">
    <property type="protein sequence ID" value="ABC90714.1"/>
    <property type="status" value="ALT_INIT"/>
    <property type="molecule type" value="Genomic_DNA"/>
</dbReference>
<dbReference type="RefSeq" id="WP_042119239.1">
    <property type="nucleotide sequence ID" value="NC_007761.1"/>
</dbReference>
<dbReference type="SMR" id="Q2K8X2"/>
<dbReference type="MEROPS" id="S24.001"/>
<dbReference type="KEGG" id="ret:RHE_CH01928"/>
<dbReference type="eggNOG" id="COG1974">
    <property type="taxonomic scope" value="Bacteria"/>
</dbReference>
<dbReference type="HOGENOM" id="CLU_066192_45_2_5"/>
<dbReference type="OrthoDB" id="9802364at2"/>
<dbReference type="Proteomes" id="UP000001936">
    <property type="component" value="Chromosome"/>
</dbReference>
<dbReference type="GO" id="GO:0003677">
    <property type="term" value="F:DNA binding"/>
    <property type="evidence" value="ECO:0007669"/>
    <property type="project" value="UniProtKB-UniRule"/>
</dbReference>
<dbReference type="GO" id="GO:0004252">
    <property type="term" value="F:serine-type endopeptidase activity"/>
    <property type="evidence" value="ECO:0007669"/>
    <property type="project" value="UniProtKB-UniRule"/>
</dbReference>
<dbReference type="GO" id="GO:0006281">
    <property type="term" value="P:DNA repair"/>
    <property type="evidence" value="ECO:0007669"/>
    <property type="project" value="UniProtKB-UniRule"/>
</dbReference>
<dbReference type="GO" id="GO:0006260">
    <property type="term" value="P:DNA replication"/>
    <property type="evidence" value="ECO:0007669"/>
    <property type="project" value="UniProtKB-UniRule"/>
</dbReference>
<dbReference type="GO" id="GO:0045892">
    <property type="term" value="P:negative regulation of DNA-templated transcription"/>
    <property type="evidence" value="ECO:0007669"/>
    <property type="project" value="UniProtKB-UniRule"/>
</dbReference>
<dbReference type="GO" id="GO:0006508">
    <property type="term" value="P:proteolysis"/>
    <property type="evidence" value="ECO:0007669"/>
    <property type="project" value="InterPro"/>
</dbReference>
<dbReference type="GO" id="GO:0009432">
    <property type="term" value="P:SOS response"/>
    <property type="evidence" value="ECO:0007669"/>
    <property type="project" value="UniProtKB-UniRule"/>
</dbReference>
<dbReference type="CDD" id="cd06529">
    <property type="entry name" value="S24_LexA-like"/>
    <property type="match status" value="1"/>
</dbReference>
<dbReference type="FunFam" id="1.10.10.10:FF:000102">
    <property type="entry name" value="LexA repressor"/>
    <property type="match status" value="1"/>
</dbReference>
<dbReference type="FunFam" id="2.10.109.10:FF:000001">
    <property type="entry name" value="LexA repressor"/>
    <property type="match status" value="1"/>
</dbReference>
<dbReference type="Gene3D" id="2.10.109.10">
    <property type="entry name" value="Umud Fragment, subunit A"/>
    <property type="match status" value="1"/>
</dbReference>
<dbReference type="Gene3D" id="1.10.10.10">
    <property type="entry name" value="Winged helix-like DNA-binding domain superfamily/Winged helix DNA-binding domain"/>
    <property type="match status" value="1"/>
</dbReference>
<dbReference type="HAMAP" id="MF_00015">
    <property type="entry name" value="LexA"/>
    <property type="match status" value="1"/>
</dbReference>
<dbReference type="InterPro" id="IPR006200">
    <property type="entry name" value="LexA"/>
</dbReference>
<dbReference type="InterPro" id="IPR039418">
    <property type="entry name" value="LexA-like"/>
</dbReference>
<dbReference type="InterPro" id="IPR036286">
    <property type="entry name" value="LexA/Signal_pep-like_sf"/>
</dbReference>
<dbReference type="InterPro" id="IPR006199">
    <property type="entry name" value="LexA_DNA-bd_dom"/>
</dbReference>
<dbReference type="InterPro" id="IPR050077">
    <property type="entry name" value="LexA_repressor"/>
</dbReference>
<dbReference type="InterPro" id="IPR006197">
    <property type="entry name" value="Peptidase_S24_LexA"/>
</dbReference>
<dbReference type="InterPro" id="IPR015927">
    <property type="entry name" value="Peptidase_S24_S26A/B/C"/>
</dbReference>
<dbReference type="InterPro" id="IPR036388">
    <property type="entry name" value="WH-like_DNA-bd_sf"/>
</dbReference>
<dbReference type="InterPro" id="IPR036390">
    <property type="entry name" value="WH_DNA-bd_sf"/>
</dbReference>
<dbReference type="NCBIfam" id="TIGR00498">
    <property type="entry name" value="lexA"/>
    <property type="match status" value="1"/>
</dbReference>
<dbReference type="PANTHER" id="PTHR33516">
    <property type="entry name" value="LEXA REPRESSOR"/>
    <property type="match status" value="1"/>
</dbReference>
<dbReference type="PANTHER" id="PTHR33516:SF2">
    <property type="entry name" value="LEXA REPRESSOR-RELATED"/>
    <property type="match status" value="1"/>
</dbReference>
<dbReference type="Pfam" id="PF01726">
    <property type="entry name" value="LexA_DNA_bind"/>
    <property type="match status" value="1"/>
</dbReference>
<dbReference type="Pfam" id="PF00717">
    <property type="entry name" value="Peptidase_S24"/>
    <property type="match status" value="1"/>
</dbReference>
<dbReference type="PRINTS" id="PR00726">
    <property type="entry name" value="LEXASERPTASE"/>
</dbReference>
<dbReference type="SUPFAM" id="SSF51306">
    <property type="entry name" value="LexA/Signal peptidase"/>
    <property type="match status" value="1"/>
</dbReference>
<dbReference type="SUPFAM" id="SSF46785">
    <property type="entry name" value="Winged helix' DNA-binding domain"/>
    <property type="match status" value="1"/>
</dbReference>
<name>LEXA_RHIEC</name>
<keyword id="KW-0068">Autocatalytic cleavage</keyword>
<keyword id="KW-0227">DNA damage</keyword>
<keyword id="KW-0234">DNA repair</keyword>
<keyword id="KW-0235">DNA replication</keyword>
<keyword id="KW-0238">DNA-binding</keyword>
<keyword id="KW-0378">Hydrolase</keyword>
<keyword id="KW-1185">Reference proteome</keyword>
<keyword id="KW-0678">Repressor</keyword>
<keyword id="KW-0742">SOS response</keyword>
<keyword id="KW-0804">Transcription</keyword>
<keyword id="KW-0805">Transcription regulation</keyword>
<evidence type="ECO:0000255" key="1">
    <source>
        <dbReference type="HAMAP-Rule" id="MF_00015"/>
    </source>
</evidence>
<evidence type="ECO:0000305" key="2"/>
<accession>Q2K8X2</accession>
<protein>
    <recommendedName>
        <fullName evidence="1">LexA repressor</fullName>
        <ecNumber evidence="1">3.4.21.88</ecNumber>
    </recommendedName>
</protein>
<sequence>MLTRKQQELLLFIHERMKESGVPPSFDEMKDALDLASKSGIHRLITALEERGFIRRLPNRARALEVIKLPEAYNPSLQPRRGFSPSVIEGSLGKPQPVAAPAAPKPVADNGNSISVPVMGRIAAGVPISAIQNNTHDIVVPADMLGSGEHYALEVKGDSMIDAGIFDGDTVIIRNGSTASPGDIVVALVDDEEATLKRFRRKGASIALEAANPAYETRIFGPDRVKVQGKLVGLIRRYH</sequence>
<reference key="1">
    <citation type="journal article" date="2006" name="Proc. Natl. Acad. Sci. U.S.A.">
        <title>The partitioned Rhizobium etli genome: genetic and metabolic redundancy in seven interacting replicons.</title>
        <authorList>
            <person name="Gonzalez V."/>
            <person name="Santamaria R.I."/>
            <person name="Bustos P."/>
            <person name="Hernandez-Gonzalez I."/>
            <person name="Medrano-Soto A."/>
            <person name="Moreno-Hagelsieb G."/>
            <person name="Janga S.C."/>
            <person name="Ramirez M.A."/>
            <person name="Jimenez-Jacinto V."/>
            <person name="Collado-Vides J."/>
            <person name="Davila G."/>
        </authorList>
    </citation>
    <scope>NUCLEOTIDE SEQUENCE [LARGE SCALE GENOMIC DNA]</scope>
    <source>
        <strain>ATCC 51251 / DSM 11541 / JCM 21823 / NBRC 15573 / CFN 42</strain>
    </source>
</reference>
<gene>
    <name evidence="1" type="primary">lexA</name>
    <name type="ordered locus">RHE_CH01928</name>
</gene>